<dbReference type="EC" id="4.6.1.-" evidence="1"/>
<dbReference type="EMBL" id="BC088280">
    <property type="protein sequence ID" value="AAH88280.1"/>
    <property type="molecule type" value="mRNA"/>
</dbReference>
<dbReference type="RefSeq" id="NP_001014035.1">
    <property type="nucleotide sequence ID" value="NM_001014013.1"/>
</dbReference>
<dbReference type="SMR" id="Q5I0I5"/>
<dbReference type="FunCoup" id="Q5I0I5">
    <property type="interactions" value="702"/>
</dbReference>
<dbReference type="STRING" id="10116.ENSRNOP00000017960"/>
<dbReference type="PhosphoSitePlus" id="Q5I0I5"/>
<dbReference type="PaxDb" id="10116-ENSRNOP00000017960"/>
<dbReference type="Ensembl" id="ENSRNOT00000017960.6">
    <property type="protein sequence ID" value="ENSRNOP00000017960.3"/>
    <property type="gene ID" value="ENSRNOG00000013216.6"/>
</dbReference>
<dbReference type="GeneID" id="307643"/>
<dbReference type="KEGG" id="rno:307643"/>
<dbReference type="UCSC" id="RGD:1305215">
    <property type="organism name" value="rat"/>
</dbReference>
<dbReference type="AGR" id="RGD:1305215"/>
<dbReference type="CTD" id="79650"/>
<dbReference type="RGD" id="1305215">
    <property type="gene designation" value="Usb1"/>
</dbReference>
<dbReference type="eggNOG" id="KOG3102">
    <property type="taxonomic scope" value="Eukaryota"/>
</dbReference>
<dbReference type="GeneTree" id="ENSGT00390000004596"/>
<dbReference type="HOGENOM" id="CLU_057212_2_0_1"/>
<dbReference type="InParanoid" id="Q5I0I5"/>
<dbReference type="OMA" id="KTVVLQY"/>
<dbReference type="OrthoDB" id="49151at2759"/>
<dbReference type="PhylomeDB" id="Q5I0I5"/>
<dbReference type="TreeFam" id="TF324364"/>
<dbReference type="PRO" id="PR:Q5I0I5"/>
<dbReference type="Proteomes" id="UP000002494">
    <property type="component" value="Chromosome 19"/>
</dbReference>
<dbReference type="Bgee" id="ENSRNOG00000013216">
    <property type="expression patterns" value="Expressed in thymus and 19 other cell types or tissues"/>
</dbReference>
<dbReference type="GO" id="GO:0045171">
    <property type="term" value="C:intercellular bridge"/>
    <property type="evidence" value="ECO:0007669"/>
    <property type="project" value="Ensembl"/>
</dbReference>
<dbReference type="GO" id="GO:0005654">
    <property type="term" value="C:nucleoplasm"/>
    <property type="evidence" value="ECO:0007669"/>
    <property type="project" value="Ensembl"/>
</dbReference>
<dbReference type="GO" id="GO:0005634">
    <property type="term" value="C:nucleus"/>
    <property type="evidence" value="ECO:0000250"/>
    <property type="project" value="UniProtKB"/>
</dbReference>
<dbReference type="GO" id="GO:0000175">
    <property type="term" value="F:3'-5'-RNA exonuclease activity"/>
    <property type="evidence" value="ECO:0000250"/>
    <property type="project" value="UniProtKB"/>
</dbReference>
<dbReference type="GO" id="GO:0016829">
    <property type="term" value="F:lyase activity"/>
    <property type="evidence" value="ECO:0007669"/>
    <property type="project" value="UniProtKB-KW"/>
</dbReference>
<dbReference type="GO" id="GO:1990838">
    <property type="term" value="F:poly(U)-specific exoribonuclease activity, producing 3' uridine cyclic phosphate ends"/>
    <property type="evidence" value="ECO:0000250"/>
    <property type="project" value="UniProtKB"/>
</dbReference>
<dbReference type="GO" id="GO:0008380">
    <property type="term" value="P:RNA splicing"/>
    <property type="evidence" value="ECO:0000250"/>
    <property type="project" value="UniProtKB"/>
</dbReference>
<dbReference type="GO" id="GO:0034472">
    <property type="term" value="P:snRNA 3'-end processing"/>
    <property type="evidence" value="ECO:0000250"/>
    <property type="project" value="UniProtKB"/>
</dbReference>
<dbReference type="GO" id="GO:0034477">
    <property type="term" value="P:U6 snRNA 3'-end processing"/>
    <property type="evidence" value="ECO:0000250"/>
    <property type="project" value="UniProtKB"/>
</dbReference>
<dbReference type="FunFam" id="3.90.1140.10:FF:000006">
    <property type="entry name" value="U6 snRNA phosphodiesterase"/>
    <property type="match status" value="1"/>
</dbReference>
<dbReference type="Gene3D" id="3.90.1140.10">
    <property type="entry name" value="Cyclic phosphodiesterase"/>
    <property type="match status" value="1"/>
</dbReference>
<dbReference type="HAMAP" id="MF_03040">
    <property type="entry name" value="USB1"/>
    <property type="match status" value="1"/>
</dbReference>
<dbReference type="InterPro" id="IPR009097">
    <property type="entry name" value="Cyclic_Pdiesterase"/>
</dbReference>
<dbReference type="InterPro" id="IPR027521">
    <property type="entry name" value="Usb1"/>
</dbReference>
<dbReference type="PANTHER" id="PTHR13522">
    <property type="entry name" value="U6 SNRNA PHOSPHODIESTERASE 1"/>
    <property type="match status" value="1"/>
</dbReference>
<dbReference type="PANTHER" id="PTHR13522:SF3">
    <property type="entry name" value="U6 SNRNA PHOSPHODIESTERASE 1"/>
    <property type="match status" value="1"/>
</dbReference>
<dbReference type="Pfam" id="PF09749">
    <property type="entry name" value="HVSL"/>
    <property type="match status" value="1"/>
</dbReference>
<dbReference type="SUPFAM" id="SSF55144">
    <property type="entry name" value="LigT-like"/>
    <property type="match status" value="1"/>
</dbReference>
<evidence type="ECO:0000250" key="1">
    <source>
        <dbReference type="UniProtKB" id="Q9BQ65"/>
    </source>
</evidence>
<evidence type="ECO:0000255" key="2">
    <source>
        <dbReference type="HAMAP-Rule" id="MF_03040"/>
    </source>
</evidence>
<evidence type="ECO:0000256" key="3">
    <source>
        <dbReference type="SAM" id="MobiDB-lite"/>
    </source>
</evidence>
<evidence type="ECO:0000305" key="4"/>
<evidence type="ECO:0000312" key="5">
    <source>
        <dbReference type="RGD" id="1305215"/>
    </source>
</evidence>
<accession>Q5I0I5</accession>
<protein>
    <recommendedName>
        <fullName evidence="4">U6 snRNA phosphodiesterase 1</fullName>
    </recommendedName>
    <alternativeName>
        <fullName evidence="1">3'-5' RNA exonuclease USB1</fullName>
        <ecNumber evidence="1">4.6.1.-</ecNumber>
    </alternativeName>
</protein>
<comment type="function">
    <text evidence="1">3'-5' RNA exonuclease that trims the 3' end of oligo(U) and oligo(A) tracts of the pre-U6 small nuclear RNA (snRNA) molecule, leading to the formation of a mature U6 snRNA 3' end-terminated with a 2',3'-cyclic phosphate. Participates in the U6 snRNA 3' end processing that prevents U6 snRNA degradation. In addition also removes uridines from the 3' end of U6atac snRNA and possibly the vault RNA VTRNA1-1.</text>
</comment>
<comment type="catalytic activity">
    <reaction evidence="1">
        <text>a 3'-end uridylyl-uridine-RNA = a 3'-end 2',3'-cyclophospho-uridine-RNA + uridine</text>
        <dbReference type="Rhea" id="RHEA:46052"/>
        <dbReference type="Rhea" id="RHEA-COMP:17384"/>
        <dbReference type="Rhea" id="RHEA-COMP:17385"/>
        <dbReference type="ChEBI" id="CHEBI:16704"/>
        <dbReference type="ChEBI" id="CHEBI:85643"/>
        <dbReference type="ChEBI" id="CHEBI:85644"/>
    </reaction>
    <physiologicalReaction direction="left-to-right" evidence="1">
        <dbReference type="Rhea" id="RHEA:46053"/>
    </physiologicalReaction>
</comment>
<comment type="catalytic activity">
    <reaction evidence="1">
        <text>a 3'-end uridylyl-adenosine-RNA = a 3'-end 2',3'-cyclophospho-uridine-RNA + adenosine</text>
        <dbReference type="Rhea" id="RHEA:67896"/>
        <dbReference type="Rhea" id="RHEA-COMP:17385"/>
        <dbReference type="Rhea" id="RHEA-COMP:17386"/>
        <dbReference type="ChEBI" id="CHEBI:16335"/>
        <dbReference type="ChEBI" id="CHEBI:85644"/>
        <dbReference type="ChEBI" id="CHEBI:176518"/>
    </reaction>
    <physiologicalReaction direction="left-to-right" evidence="1">
        <dbReference type="Rhea" id="RHEA:67897"/>
    </physiologicalReaction>
</comment>
<comment type="subunit">
    <text evidence="1">Interacts with PLRG1, CDC5L and PRPF19.</text>
</comment>
<comment type="subcellular location">
    <subcellularLocation>
        <location evidence="2">Nucleus</location>
    </subcellularLocation>
</comment>
<comment type="similarity">
    <text evidence="2">Belongs to the 2H phosphoesterase superfamily. USB1 family.</text>
</comment>
<proteinExistence type="evidence at transcript level"/>
<name>USB1_RAT</name>
<gene>
    <name evidence="2 5" type="primary">Usb1</name>
</gene>
<keyword id="KW-0378">Hydrolase</keyword>
<keyword id="KW-0456">Lyase</keyword>
<keyword id="KW-0540">Nuclease</keyword>
<keyword id="KW-0539">Nucleus</keyword>
<keyword id="KW-1185">Reference proteome</keyword>
<reference key="1">
    <citation type="journal article" date="2004" name="Genome Res.">
        <title>The status, quality, and expansion of the NIH full-length cDNA project: the Mammalian Gene Collection (MGC).</title>
        <authorList>
            <consortium name="The MGC Project Team"/>
        </authorList>
    </citation>
    <scope>NUCLEOTIDE SEQUENCE [LARGE SCALE MRNA]</scope>
    <source>
        <tissue>Thymus</tissue>
    </source>
</reference>
<feature type="chain" id="PRO_0000274393" description="U6 snRNA phosphodiesterase 1">
    <location>
        <begin position="1"/>
        <end position="267"/>
    </location>
</feature>
<feature type="region of interest" description="Disordered" evidence="3">
    <location>
        <begin position="1"/>
        <end position="72"/>
    </location>
</feature>
<feature type="active site" description="Proton acceptor" evidence="2">
    <location>
        <position position="122"/>
    </location>
</feature>
<feature type="active site" description="Proton donor" evidence="2">
    <location>
        <position position="210"/>
    </location>
</feature>
<feature type="binding site" evidence="1">
    <location>
        <begin position="122"/>
        <end position="124"/>
    </location>
    <ligand>
        <name>AMP</name>
        <dbReference type="ChEBI" id="CHEBI:456215"/>
    </ligand>
</feature>
<feature type="binding site" evidence="1">
    <location>
        <position position="166"/>
    </location>
    <ligand>
        <name>UMP</name>
        <dbReference type="ChEBI" id="CHEBI:57865"/>
    </ligand>
</feature>
<feature type="binding site" evidence="1">
    <location>
        <position position="204"/>
    </location>
    <ligand>
        <name>AMP</name>
        <dbReference type="ChEBI" id="CHEBI:456215"/>
    </ligand>
</feature>
<feature type="binding site" evidence="1">
    <location>
        <position position="204"/>
    </location>
    <ligand>
        <name>UMP</name>
        <dbReference type="ChEBI" id="CHEBI:57865"/>
    </ligand>
</feature>
<feature type="binding site" evidence="1">
    <location>
        <begin position="206"/>
        <end position="212"/>
    </location>
    <ligand>
        <name>AMP</name>
        <dbReference type="ChEBI" id="CHEBI:456215"/>
    </ligand>
</feature>
<feature type="binding site" evidence="1">
    <location>
        <begin position="208"/>
        <end position="212"/>
    </location>
    <ligand>
        <name>UMP</name>
        <dbReference type="ChEBI" id="CHEBI:57865"/>
    </ligand>
</feature>
<organism>
    <name type="scientific">Rattus norvegicus</name>
    <name type="common">Rat</name>
    <dbReference type="NCBI Taxonomy" id="10116"/>
    <lineage>
        <taxon>Eukaryota</taxon>
        <taxon>Metazoa</taxon>
        <taxon>Chordata</taxon>
        <taxon>Craniata</taxon>
        <taxon>Vertebrata</taxon>
        <taxon>Euteleostomi</taxon>
        <taxon>Mammalia</taxon>
        <taxon>Eutheria</taxon>
        <taxon>Euarchontoglires</taxon>
        <taxon>Glires</taxon>
        <taxon>Rodentia</taxon>
        <taxon>Myomorpha</taxon>
        <taxon>Muroidea</taxon>
        <taxon>Muridae</taxon>
        <taxon>Murinae</taxon>
        <taxon>Rattus</taxon>
    </lineage>
</organism>
<sequence>MNAAPLVGYSSSGSEDEAEAVAAGRSKPGSGLHRCGQNPLPSQRFPVPDSVLNMFPSTEEGPEDDSARHGGRIRTFPHERGNWATHIYIPYEANEEFQDLLDVLLPRAQMFAPRLVQMEEFHLSLSQSVVLRHHWILPFVQVLKDRMASFQRFFFTANRVKIYTNQEKTRTFIGLEVSSGHAQFLDMVSEVDRVMKEFDLTTFYQDPSFHVSLAWCVGDARLQLEGQCQQELQEIVDEFEDSEMLLRVLAEQVRCKSGNKFFSMPLK</sequence>